<sequence>MIALIDYKAGNLNSVAKAFEKIGAINFIAKNPKDLQKADKLLLPGVGSFKEAMKNLKELGFIEALKEQVLVQKKPILGICLGMQLFLERGYEGGVCEGLGFIEGEVVKFEEDLNLKIPHMGWNELEILKQVPLYQGIDNKSDFYFVHSFYVKCKDEFVSAKAQYGHKFVASLQKDHIFATQFHPEKSQNLGLKLLENFIRL</sequence>
<reference key="1">
    <citation type="journal article" date="2005" name="PLoS Biol.">
        <title>Major structural differences and novel potential virulence mechanisms from the genomes of multiple Campylobacter species.</title>
        <authorList>
            <person name="Fouts D.E."/>
            <person name="Mongodin E.F."/>
            <person name="Mandrell R.E."/>
            <person name="Miller W.G."/>
            <person name="Rasko D.A."/>
            <person name="Ravel J."/>
            <person name="Brinkac L.M."/>
            <person name="DeBoy R.T."/>
            <person name="Parker C.T."/>
            <person name="Daugherty S.C."/>
            <person name="Dodson R.J."/>
            <person name="Durkin A.S."/>
            <person name="Madupu R."/>
            <person name="Sullivan S.A."/>
            <person name="Shetty J.U."/>
            <person name="Ayodeji M.A."/>
            <person name="Shvartsbeyn A."/>
            <person name="Schatz M.C."/>
            <person name="Badger J.H."/>
            <person name="Fraser C.M."/>
            <person name="Nelson K.E."/>
        </authorList>
    </citation>
    <scope>NUCLEOTIDE SEQUENCE [LARGE SCALE GENOMIC DNA]</scope>
    <source>
        <strain>RM1221</strain>
    </source>
</reference>
<gene>
    <name evidence="1" type="primary">hisH1</name>
    <name type="ordered locus">CJE1510</name>
</gene>
<accession>Q5HT90</accession>
<evidence type="ECO:0000255" key="1">
    <source>
        <dbReference type="HAMAP-Rule" id="MF_00278"/>
    </source>
</evidence>
<keyword id="KW-0028">Amino-acid biosynthesis</keyword>
<keyword id="KW-0963">Cytoplasm</keyword>
<keyword id="KW-0315">Glutamine amidotransferase</keyword>
<keyword id="KW-0368">Histidine biosynthesis</keyword>
<keyword id="KW-0378">Hydrolase</keyword>
<keyword id="KW-0456">Lyase</keyword>
<feature type="chain" id="PRO_0000231713" description="Imidazole glycerol phosphate synthase subunit HisH 1">
    <location>
        <begin position="1"/>
        <end position="201"/>
    </location>
</feature>
<feature type="domain" description="Glutamine amidotransferase type-1" evidence="1">
    <location>
        <begin position="1"/>
        <end position="201"/>
    </location>
</feature>
<feature type="active site" description="Nucleophile" evidence="1">
    <location>
        <position position="80"/>
    </location>
</feature>
<feature type="active site" evidence="1">
    <location>
        <position position="183"/>
    </location>
</feature>
<feature type="active site" evidence="1">
    <location>
        <position position="185"/>
    </location>
</feature>
<organism>
    <name type="scientific">Campylobacter jejuni (strain RM1221)</name>
    <dbReference type="NCBI Taxonomy" id="195099"/>
    <lineage>
        <taxon>Bacteria</taxon>
        <taxon>Pseudomonadati</taxon>
        <taxon>Campylobacterota</taxon>
        <taxon>Epsilonproteobacteria</taxon>
        <taxon>Campylobacterales</taxon>
        <taxon>Campylobacteraceae</taxon>
        <taxon>Campylobacter</taxon>
    </lineage>
</organism>
<dbReference type="EC" id="4.3.2.10" evidence="1"/>
<dbReference type="EC" id="3.5.1.2" evidence="1"/>
<dbReference type="EMBL" id="CP000025">
    <property type="protein sequence ID" value="AAW35950.1"/>
    <property type="molecule type" value="Genomic_DNA"/>
</dbReference>
<dbReference type="SMR" id="Q5HT90"/>
<dbReference type="KEGG" id="cjr:CJE1510"/>
<dbReference type="HOGENOM" id="CLU_071837_2_0_7"/>
<dbReference type="UniPathway" id="UPA00031">
    <property type="reaction ID" value="UER00010"/>
</dbReference>
<dbReference type="GO" id="GO:0005737">
    <property type="term" value="C:cytoplasm"/>
    <property type="evidence" value="ECO:0007669"/>
    <property type="project" value="UniProtKB-SubCell"/>
</dbReference>
<dbReference type="GO" id="GO:0004359">
    <property type="term" value="F:glutaminase activity"/>
    <property type="evidence" value="ECO:0007669"/>
    <property type="project" value="UniProtKB-EC"/>
</dbReference>
<dbReference type="GO" id="GO:0000107">
    <property type="term" value="F:imidazoleglycerol-phosphate synthase activity"/>
    <property type="evidence" value="ECO:0007669"/>
    <property type="project" value="UniProtKB-UniRule"/>
</dbReference>
<dbReference type="GO" id="GO:0016829">
    <property type="term" value="F:lyase activity"/>
    <property type="evidence" value="ECO:0007669"/>
    <property type="project" value="UniProtKB-KW"/>
</dbReference>
<dbReference type="GO" id="GO:0000105">
    <property type="term" value="P:L-histidine biosynthetic process"/>
    <property type="evidence" value="ECO:0007669"/>
    <property type="project" value="UniProtKB-UniRule"/>
</dbReference>
<dbReference type="CDD" id="cd01748">
    <property type="entry name" value="GATase1_IGP_Synthase"/>
    <property type="match status" value="1"/>
</dbReference>
<dbReference type="FunFam" id="3.40.50.880:FF:000009">
    <property type="entry name" value="Imidazole glycerol phosphate synthase subunit HisH"/>
    <property type="match status" value="1"/>
</dbReference>
<dbReference type="Gene3D" id="3.40.50.880">
    <property type="match status" value="1"/>
</dbReference>
<dbReference type="HAMAP" id="MF_00278">
    <property type="entry name" value="HisH"/>
    <property type="match status" value="1"/>
</dbReference>
<dbReference type="InterPro" id="IPR029062">
    <property type="entry name" value="Class_I_gatase-like"/>
</dbReference>
<dbReference type="InterPro" id="IPR017926">
    <property type="entry name" value="GATASE"/>
</dbReference>
<dbReference type="InterPro" id="IPR010139">
    <property type="entry name" value="Imidazole-glycPsynth_HisH"/>
</dbReference>
<dbReference type="NCBIfam" id="TIGR01855">
    <property type="entry name" value="IMP_synth_hisH"/>
    <property type="match status" value="1"/>
</dbReference>
<dbReference type="PANTHER" id="PTHR42701">
    <property type="entry name" value="IMIDAZOLE GLYCEROL PHOSPHATE SYNTHASE SUBUNIT HISH"/>
    <property type="match status" value="1"/>
</dbReference>
<dbReference type="PANTHER" id="PTHR42701:SF1">
    <property type="entry name" value="IMIDAZOLE GLYCEROL PHOSPHATE SYNTHASE SUBUNIT HISH"/>
    <property type="match status" value="1"/>
</dbReference>
<dbReference type="Pfam" id="PF00117">
    <property type="entry name" value="GATase"/>
    <property type="match status" value="1"/>
</dbReference>
<dbReference type="PIRSF" id="PIRSF000495">
    <property type="entry name" value="Amidotransf_hisH"/>
    <property type="match status" value="1"/>
</dbReference>
<dbReference type="SUPFAM" id="SSF52317">
    <property type="entry name" value="Class I glutamine amidotransferase-like"/>
    <property type="match status" value="1"/>
</dbReference>
<dbReference type="PROSITE" id="PS51273">
    <property type="entry name" value="GATASE_TYPE_1"/>
    <property type="match status" value="1"/>
</dbReference>
<protein>
    <recommendedName>
        <fullName evidence="1">Imidazole glycerol phosphate synthase subunit HisH 1</fullName>
        <ecNumber evidence="1">4.3.2.10</ecNumber>
    </recommendedName>
    <alternativeName>
        <fullName evidence="1">IGP synthase glutaminase subunit 1</fullName>
        <ecNumber evidence="1">3.5.1.2</ecNumber>
    </alternativeName>
    <alternativeName>
        <fullName evidence="1">IGP synthase subunit HisH 1</fullName>
    </alternativeName>
    <alternativeName>
        <fullName evidence="1">ImGP synthase subunit HisH 1</fullName>
        <shortName evidence="1">IGPS subunit HisH 1</shortName>
    </alternativeName>
</protein>
<name>HIS51_CAMJR</name>
<comment type="function">
    <text evidence="1">IGPS catalyzes the conversion of PRFAR and glutamine to IGP, AICAR and glutamate. The HisH subunit provides the glutamine amidotransferase activity that produces the ammonia necessary to HisF for the synthesis of IGP and AICAR.</text>
</comment>
<comment type="catalytic activity">
    <reaction evidence="1">
        <text>5-[(5-phospho-1-deoxy-D-ribulos-1-ylimino)methylamino]-1-(5-phospho-beta-D-ribosyl)imidazole-4-carboxamide + L-glutamine = D-erythro-1-(imidazol-4-yl)glycerol 3-phosphate + 5-amino-1-(5-phospho-beta-D-ribosyl)imidazole-4-carboxamide + L-glutamate + H(+)</text>
        <dbReference type="Rhea" id="RHEA:24793"/>
        <dbReference type="ChEBI" id="CHEBI:15378"/>
        <dbReference type="ChEBI" id="CHEBI:29985"/>
        <dbReference type="ChEBI" id="CHEBI:58278"/>
        <dbReference type="ChEBI" id="CHEBI:58359"/>
        <dbReference type="ChEBI" id="CHEBI:58475"/>
        <dbReference type="ChEBI" id="CHEBI:58525"/>
        <dbReference type="EC" id="4.3.2.10"/>
    </reaction>
</comment>
<comment type="catalytic activity">
    <reaction evidence="1">
        <text>L-glutamine + H2O = L-glutamate + NH4(+)</text>
        <dbReference type="Rhea" id="RHEA:15889"/>
        <dbReference type="ChEBI" id="CHEBI:15377"/>
        <dbReference type="ChEBI" id="CHEBI:28938"/>
        <dbReference type="ChEBI" id="CHEBI:29985"/>
        <dbReference type="ChEBI" id="CHEBI:58359"/>
        <dbReference type="EC" id="3.5.1.2"/>
    </reaction>
</comment>
<comment type="pathway">
    <text evidence="1">Amino-acid biosynthesis; L-histidine biosynthesis; L-histidine from 5-phospho-alpha-D-ribose 1-diphosphate: step 5/9.</text>
</comment>
<comment type="subunit">
    <text evidence="1">Heterodimer of HisH and HisF.</text>
</comment>
<comment type="subcellular location">
    <subcellularLocation>
        <location evidence="1">Cytoplasm</location>
    </subcellularLocation>
</comment>
<proteinExistence type="inferred from homology"/>